<accession>Q5U4A3</accession>
<gene>
    <name evidence="1" type="primary">washc1</name>
    <name type="synonym">wash1</name>
</gene>
<feature type="chain" id="PRO_0000390967" description="WASH complex subunit 1">
    <location>
        <begin position="1"/>
        <end position="472"/>
    </location>
</feature>
<feature type="domain" description="WH2">
    <location>
        <begin position="364"/>
        <end position="386"/>
    </location>
</feature>
<feature type="region of interest" description="Required for WASH complex assembly" evidence="2">
    <location>
        <begin position="1"/>
        <end position="51"/>
    </location>
</feature>
<feature type="region of interest" description="Disordered" evidence="4">
    <location>
        <begin position="294"/>
        <end position="411"/>
    </location>
</feature>
<feature type="region of interest" description="VCA" evidence="2">
    <location>
        <begin position="352"/>
        <end position="472"/>
    </location>
</feature>
<feature type="region of interest" description="Disordered" evidence="4">
    <location>
        <begin position="429"/>
        <end position="472"/>
    </location>
</feature>
<feature type="compositionally biased region" description="Pro residues" evidence="4">
    <location>
        <begin position="301"/>
        <end position="334"/>
    </location>
</feature>
<feature type="compositionally biased region" description="Basic and acidic residues" evidence="4">
    <location>
        <begin position="385"/>
        <end position="400"/>
    </location>
</feature>
<comment type="function">
    <text evidence="1 2">Acts as a nucleation-promoting factor at the surface of endosomes, where it recruits and activates the Arp2/3 complex to induce actin polymerization, playing a key role in the fission of tubules that serve as transport intermediates during endosome sorting.</text>
</comment>
<comment type="subunit">
    <text evidence="1 2">Component of the WASH complex.</text>
</comment>
<comment type="subcellular location">
    <subcellularLocation>
        <location evidence="1">Early endosome membrane</location>
    </subcellularLocation>
    <subcellularLocation>
        <location evidence="3">Recycling endosome membrane</location>
    </subcellularLocation>
</comment>
<comment type="domain">
    <text evidence="2">The VCA (verprolin, cofilin, acidic) domain promotes actin polymerization by the Arp2/3 complex in vitro.</text>
</comment>
<comment type="similarity">
    <text evidence="5">Belongs to the WASH1 family.</text>
</comment>
<reference key="1">
    <citation type="submission" date="2004-10" db="EMBL/GenBank/DDBJ databases">
        <authorList>
            <consortium name="NIH - Xenopus Gene Collection (XGC) project"/>
        </authorList>
    </citation>
    <scope>NUCLEOTIDE SEQUENCE [LARGE SCALE MRNA]</scope>
    <source>
        <tissue>Lung</tissue>
    </source>
</reference>
<dbReference type="EMBL" id="BC085201">
    <property type="protein sequence ID" value="AAH85201.1"/>
    <property type="molecule type" value="mRNA"/>
</dbReference>
<dbReference type="RefSeq" id="NP_001088612.1">
    <property type="nucleotide sequence ID" value="NM_001095143.1"/>
</dbReference>
<dbReference type="SMR" id="Q5U4A3"/>
<dbReference type="BioGRID" id="105587">
    <property type="interactions" value="1"/>
</dbReference>
<dbReference type="IntAct" id="Q5U4A3">
    <property type="interactions" value="1"/>
</dbReference>
<dbReference type="DNASU" id="495507"/>
<dbReference type="GeneID" id="495507"/>
<dbReference type="KEGG" id="xla:495507"/>
<dbReference type="AGR" id="Xenbase:XB-GENE-5947866"/>
<dbReference type="CTD" id="495507"/>
<dbReference type="Xenbase" id="XB-GENE-5947866">
    <property type="gene designation" value="washc1.L"/>
</dbReference>
<dbReference type="OrthoDB" id="307871at2759"/>
<dbReference type="Proteomes" id="UP000186698">
    <property type="component" value="Chromosome 3L"/>
</dbReference>
<dbReference type="Bgee" id="495507">
    <property type="expression patterns" value="Expressed in internal ear and 19 other cell types or tissues"/>
</dbReference>
<dbReference type="GO" id="GO:0005829">
    <property type="term" value="C:cytosol"/>
    <property type="evidence" value="ECO:0007669"/>
    <property type="project" value="GOC"/>
</dbReference>
<dbReference type="GO" id="GO:0005769">
    <property type="term" value="C:early endosome"/>
    <property type="evidence" value="ECO:0000250"/>
    <property type="project" value="UniProtKB"/>
</dbReference>
<dbReference type="GO" id="GO:0031901">
    <property type="term" value="C:early endosome membrane"/>
    <property type="evidence" value="ECO:0007669"/>
    <property type="project" value="UniProtKB-SubCell"/>
</dbReference>
<dbReference type="GO" id="GO:0055037">
    <property type="term" value="C:recycling endosome"/>
    <property type="evidence" value="ECO:0000250"/>
    <property type="project" value="UniProtKB"/>
</dbReference>
<dbReference type="GO" id="GO:0055038">
    <property type="term" value="C:recycling endosome membrane"/>
    <property type="evidence" value="ECO:0007669"/>
    <property type="project" value="UniProtKB-SubCell"/>
</dbReference>
<dbReference type="GO" id="GO:0071203">
    <property type="term" value="C:WASH complex"/>
    <property type="evidence" value="ECO:0000250"/>
    <property type="project" value="UniProtKB"/>
</dbReference>
<dbReference type="GO" id="GO:0003779">
    <property type="term" value="F:actin binding"/>
    <property type="evidence" value="ECO:0007669"/>
    <property type="project" value="UniProtKB-KW"/>
</dbReference>
<dbReference type="GO" id="GO:0043014">
    <property type="term" value="F:alpha-tubulin binding"/>
    <property type="evidence" value="ECO:0000250"/>
    <property type="project" value="UniProtKB"/>
</dbReference>
<dbReference type="GO" id="GO:0043015">
    <property type="term" value="F:gamma-tubulin binding"/>
    <property type="evidence" value="ECO:0000318"/>
    <property type="project" value="GO_Central"/>
</dbReference>
<dbReference type="GO" id="GO:0034314">
    <property type="term" value="P:Arp2/3 complex-mediated actin nucleation"/>
    <property type="evidence" value="ECO:0000250"/>
    <property type="project" value="UniProtKB"/>
</dbReference>
<dbReference type="GO" id="GO:0032456">
    <property type="term" value="P:endocytic recycling"/>
    <property type="evidence" value="ECO:0000318"/>
    <property type="project" value="GO_Central"/>
</dbReference>
<dbReference type="GO" id="GO:0016197">
    <property type="term" value="P:endosomal transport"/>
    <property type="evidence" value="ECO:0000250"/>
    <property type="project" value="UniProtKB"/>
</dbReference>
<dbReference type="GO" id="GO:0006887">
    <property type="term" value="P:exocytosis"/>
    <property type="evidence" value="ECO:0000318"/>
    <property type="project" value="GO_Central"/>
</dbReference>
<dbReference type="GO" id="GO:0015031">
    <property type="term" value="P:protein transport"/>
    <property type="evidence" value="ECO:0007669"/>
    <property type="project" value="UniProtKB-KW"/>
</dbReference>
<dbReference type="GO" id="GO:0042147">
    <property type="term" value="P:retrograde transport, endosome to Golgi"/>
    <property type="evidence" value="ECO:0000250"/>
    <property type="project" value="UniProtKB"/>
</dbReference>
<dbReference type="InterPro" id="IPR028290">
    <property type="entry name" value="WASH1"/>
</dbReference>
<dbReference type="InterPro" id="IPR021854">
    <property type="entry name" value="WASH1_WAHD"/>
</dbReference>
<dbReference type="PANTHER" id="PTHR23331">
    <property type="entry name" value="CXYORF1"/>
    <property type="match status" value="1"/>
</dbReference>
<dbReference type="PANTHER" id="PTHR23331:SF5">
    <property type="entry name" value="WAS PROTEIN FAMILY HOMOLOG 2-RELATED"/>
    <property type="match status" value="1"/>
</dbReference>
<dbReference type="Pfam" id="PF11945">
    <property type="entry name" value="WASH_WAHD"/>
    <property type="match status" value="1"/>
</dbReference>
<keyword id="KW-0009">Actin-binding</keyword>
<keyword id="KW-0967">Endosome</keyword>
<keyword id="KW-0472">Membrane</keyword>
<keyword id="KW-0653">Protein transport</keyword>
<keyword id="KW-1185">Reference proteome</keyword>
<keyword id="KW-0813">Transport</keyword>
<proteinExistence type="evidence at transcript level"/>
<organism>
    <name type="scientific">Xenopus laevis</name>
    <name type="common">African clawed frog</name>
    <dbReference type="NCBI Taxonomy" id="8355"/>
    <lineage>
        <taxon>Eukaryota</taxon>
        <taxon>Metazoa</taxon>
        <taxon>Chordata</taxon>
        <taxon>Craniata</taxon>
        <taxon>Vertebrata</taxon>
        <taxon>Euteleostomi</taxon>
        <taxon>Amphibia</taxon>
        <taxon>Batrachia</taxon>
        <taxon>Anura</taxon>
        <taxon>Pipoidea</taxon>
        <taxon>Pipidae</taxon>
        <taxon>Xenopodinae</taxon>
        <taxon>Xenopus</taxon>
        <taxon>Xenopus</taxon>
    </lineage>
</organism>
<protein>
    <recommendedName>
        <fullName evidence="1">WASH complex subunit 1</fullName>
    </recommendedName>
    <alternativeName>
        <fullName>WAS protein family homolog 1</fullName>
    </alternativeName>
</protein>
<sequence length="472" mass="51124">MPQNRSVESQAYSLPLILPDLRREEAIHQITDTLQHLQTVSNDIFSRILQRVETNRDQLQRINGRLSLAQAKIERLKGSKKAIKVFSSAKYPAPDRLQEYSSIFAGAKDGWSAKKQRHKIQSKHRPLDEQAVQEKLKYFPVCVNTRGQDEESAEEGLGSLPRNINSVSSLLLFNTTENLYKKYVLLDPLAGVVTRTNPALEGEDEEKLFDAPLSITKREQLERQTAENYFYVPDLGQVPEIDVPYSLPDLLGVADDLMYSADLGPGIAPSAPGVPIPELPTFTTEDITENSITDRQDGRLLPPPPPPPPPPPPPPPPEPSALSPPAPPPPPLSIPAPAKKGGSDPGDQGAVQGAPKEVVNPSNGRASLLESIRQAGGIGKANLRNVKEKKLEKKKMKEQEQVGATGGGGDLMSDLFNKLAMRRKGISGKVPAAGEASGDGPTGAFARISDTIPPLPPPHQASGDGDEDDWES</sequence>
<name>WASH1_XENLA</name>
<evidence type="ECO:0000250" key="1">
    <source>
        <dbReference type="UniProtKB" id="A8K0Z3"/>
    </source>
</evidence>
<evidence type="ECO:0000250" key="2">
    <source>
        <dbReference type="UniProtKB" id="C4AMC7"/>
    </source>
</evidence>
<evidence type="ECO:0000250" key="3">
    <source>
        <dbReference type="UniProtKB" id="Q8VDD8"/>
    </source>
</evidence>
<evidence type="ECO:0000256" key="4">
    <source>
        <dbReference type="SAM" id="MobiDB-lite"/>
    </source>
</evidence>
<evidence type="ECO:0000305" key="5"/>